<proteinExistence type="inferred from homology"/>
<accession>A2T384</accession>
<organism>
    <name type="scientific">Angiopteris evecta</name>
    <name type="common">Mule's foot fern</name>
    <name type="synonym">Polypodium evectum</name>
    <dbReference type="NCBI Taxonomy" id="13825"/>
    <lineage>
        <taxon>Eukaryota</taxon>
        <taxon>Viridiplantae</taxon>
        <taxon>Streptophyta</taxon>
        <taxon>Embryophyta</taxon>
        <taxon>Tracheophyta</taxon>
        <taxon>Polypodiopsida</taxon>
        <taxon>Marattiidae</taxon>
        <taxon>Marattiales</taxon>
        <taxon>Marattiaceae</taxon>
        <taxon>Angiopteris</taxon>
    </lineage>
</organism>
<sequence>MAHSVKIYDTCIGCTQCVRACPTDVLEMIPWDGCKANQIASAPRTEDCVGCKRCESACPTDFLSVRVYLGAETTRSMGLAY</sequence>
<geneLocation type="chloroplast"/>
<comment type="function">
    <text evidence="2">Apoprotein for the two 4Fe-4S centers FA and FB of photosystem I (PSI); essential for photochemical activity. FB is the terminal electron acceptor of PSI, donating electrons to ferredoxin. The C-terminus interacts with PsaA/B/D and helps assemble the protein into the PSI complex. Required for binding of PsaD and PsaE to PSI. PSI is a plastocyanin-ferredoxin oxidoreductase, converting photonic excitation into a charge separation, which transfers an electron from the donor P700 chlorophyll pair to the spectroscopically characterized acceptors A0, A1, FX, FA and FB in turn.</text>
</comment>
<comment type="catalytic activity">
    <reaction evidence="2">
        <text>reduced [plastocyanin] + hnu + oxidized [2Fe-2S]-[ferredoxin] = oxidized [plastocyanin] + reduced [2Fe-2S]-[ferredoxin]</text>
        <dbReference type="Rhea" id="RHEA:30407"/>
        <dbReference type="Rhea" id="RHEA-COMP:10000"/>
        <dbReference type="Rhea" id="RHEA-COMP:10001"/>
        <dbReference type="Rhea" id="RHEA-COMP:10039"/>
        <dbReference type="Rhea" id="RHEA-COMP:10040"/>
        <dbReference type="ChEBI" id="CHEBI:29036"/>
        <dbReference type="ChEBI" id="CHEBI:30212"/>
        <dbReference type="ChEBI" id="CHEBI:33737"/>
        <dbReference type="ChEBI" id="CHEBI:33738"/>
        <dbReference type="ChEBI" id="CHEBI:49552"/>
        <dbReference type="EC" id="1.97.1.12"/>
    </reaction>
</comment>
<comment type="cofactor">
    <cofactor evidence="2">
        <name>[4Fe-4S] cluster</name>
        <dbReference type="ChEBI" id="CHEBI:49883"/>
    </cofactor>
    <text evidence="2">Binds 2 [4Fe-4S] clusters. Cluster 2 is most probably the spectroscopically characterized electron acceptor FA and cluster 1 is most probably FB.</text>
</comment>
<comment type="subunit">
    <text evidence="2">The eukaryotic PSI reaction center is composed of at least 11 subunits.</text>
</comment>
<comment type="subcellular location">
    <subcellularLocation>
        <location evidence="2">Plastid</location>
        <location evidence="2">Chloroplast thylakoid membrane</location>
        <topology evidence="2">Peripheral membrane protein</topology>
        <orientation evidence="2">Stromal side</orientation>
    </subcellularLocation>
</comment>
<gene>
    <name evidence="2" type="primary">psaC</name>
</gene>
<keyword id="KW-0004">4Fe-4S</keyword>
<keyword id="KW-0150">Chloroplast</keyword>
<keyword id="KW-0249">Electron transport</keyword>
<keyword id="KW-0408">Iron</keyword>
<keyword id="KW-0411">Iron-sulfur</keyword>
<keyword id="KW-0472">Membrane</keyword>
<keyword id="KW-0479">Metal-binding</keyword>
<keyword id="KW-0560">Oxidoreductase</keyword>
<keyword id="KW-0602">Photosynthesis</keyword>
<keyword id="KW-0603">Photosystem I</keyword>
<keyword id="KW-0934">Plastid</keyword>
<keyword id="KW-0677">Repeat</keyword>
<keyword id="KW-0793">Thylakoid</keyword>
<keyword id="KW-0813">Transport</keyword>
<protein>
    <recommendedName>
        <fullName evidence="2">Photosystem I iron-sulfur center</fullName>
        <ecNumber evidence="2">1.97.1.12</ecNumber>
    </recommendedName>
    <alternativeName>
        <fullName evidence="2">9 kDa polypeptide</fullName>
    </alternativeName>
    <alternativeName>
        <fullName evidence="2">PSI-C</fullName>
    </alternativeName>
    <alternativeName>
        <fullName evidence="2">Photosystem I subunit VII</fullName>
    </alternativeName>
    <alternativeName>
        <fullName evidence="2">PsaC</fullName>
    </alternativeName>
</protein>
<reference key="1">
    <citation type="journal article" date="2007" name="Am. Fern J.">
        <title>The complete plastid genome sequence of Angiopteris evecta (G. Forst.) Hoffm. (Marattiaceae).</title>
        <authorList>
            <person name="Roper J.M."/>
            <person name="Hansen S.K."/>
            <person name="Wolf P.G."/>
            <person name="Karol K.G."/>
            <person name="Mandoli D.F."/>
            <person name="Everett K.D.E."/>
            <person name="Kuehl J.V."/>
            <person name="Boore J.L."/>
        </authorList>
    </citation>
    <scope>NUCLEOTIDE SEQUENCE [LARGE SCALE GENOMIC DNA]</scope>
</reference>
<feature type="initiator methionine" description="Removed" evidence="1">
    <location>
        <position position="1"/>
    </location>
</feature>
<feature type="chain" id="PRO_0000292113" description="Photosystem I iron-sulfur center">
    <location>
        <begin position="2"/>
        <end position="81"/>
    </location>
</feature>
<feature type="domain" description="4Fe-4S ferredoxin-type 1" evidence="2">
    <location>
        <begin position="2"/>
        <end position="31"/>
    </location>
</feature>
<feature type="domain" description="4Fe-4S ferredoxin-type 2" evidence="2">
    <location>
        <begin position="39"/>
        <end position="68"/>
    </location>
</feature>
<feature type="binding site" evidence="2">
    <location>
        <position position="11"/>
    </location>
    <ligand>
        <name>[4Fe-4S] cluster</name>
        <dbReference type="ChEBI" id="CHEBI:49883"/>
        <label>1</label>
    </ligand>
</feature>
<feature type="binding site" evidence="2">
    <location>
        <position position="14"/>
    </location>
    <ligand>
        <name>[4Fe-4S] cluster</name>
        <dbReference type="ChEBI" id="CHEBI:49883"/>
        <label>1</label>
    </ligand>
</feature>
<feature type="binding site" evidence="2">
    <location>
        <position position="17"/>
    </location>
    <ligand>
        <name>[4Fe-4S] cluster</name>
        <dbReference type="ChEBI" id="CHEBI:49883"/>
        <label>1</label>
    </ligand>
</feature>
<feature type="binding site" evidence="2">
    <location>
        <position position="21"/>
    </location>
    <ligand>
        <name>[4Fe-4S] cluster</name>
        <dbReference type="ChEBI" id="CHEBI:49883"/>
        <label>2</label>
    </ligand>
</feature>
<feature type="binding site" evidence="2">
    <location>
        <position position="48"/>
    </location>
    <ligand>
        <name>[4Fe-4S] cluster</name>
        <dbReference type="ChEBI" id="CHEBI:49883"/>
        <label>2</label>
    </ligand>
</feature>
<feature type="binding site" evidence="2">
    <location>
        <position position="51"/>
    </location>
    <ligand>
        <name>[4Fe-4S] cluster</name>
        <dbReference type="ChEBI" id="CHEBI:49883"/>
        <label>2</label>
    </ligand>
</feature>
<feature type="binding site" evidence="2">
    <location>
        <position position="54"/>
    </location>
    <ligand>
        <name>[4Fe-4S] cluster</name>
        <dbReference type="ChEBI" id="CHEBI:49883"/>
        <label>2</label>
    </ligand>
</feature>
<feature type="binding site" evidence="2">
    <location>
        <position position="58"/>
    </location>
    <ligand>
        <name>[4Fe-4S] cluster</name>
        <dbReference type="ChEBI" id="CHEBI:49883"/>
        <label>1</label>
    </ligand>
</feature>
<name>PSAC_ANGEV</name>
<dbReference type="EC" id="1.97.1.12" evidence="2"/>
<dbReference type="EMBL" id="DQ821119">
    <property type="protein sequence ID" value="ABG79651.1"/>
    <property type="molecule type" value="Genomic_DNA"/>
</dbReference>
<dbReference type="RefSeq" id="YP_001023752.1">
    <property type="nucleotide sequence ID" value="NC_008829.1"/>
</dbReference>
<dbReference type="SMR" id="A2T384"/>
<dbReference type="GeneID" id="4788267"/>
<dbReference type="GO" id="GO:0009535">
    <property type="term" value="C:chloroplast thylakoid membrane"/>
    <property type="evidence" value="ECO:0007669"/>
    <property type="project" value="UniProtKB-SubCell"/>
</dbReference>
<dbReference type="GO" id="GO:0009522">
    <property type="term" value="C:photosystem I"/>
    <property type="evidence" value="ECO:0007669"/>
    <property type="project" value="UniProtKB-KW"/>
</dbReference>
<dbReference type="GO" id="GO:0051539">
    <property type="term" value="F:4 iron, 4 sulfur cluster binding"/>
    <property type="evidence" value="ECO:0007669"/>
    <property type="project" value="UniProtKB-KW"/>
</dbReference>
<dbReference type="GO" id="GO:0009055">
    <property type="term" value="F:electron transfer activity"/>
    <property type="evidence" value="ECO:0007669"/>
    <property type="project" value="UniProtKB-UniRule"/>
</dbReference>
<dbReference type="GO" id="GO:0046872">
    <property type="term" value="F:metal ion binding"/>
    <property type="evidence" value="ECO:0007669"/>
    <property type="project" value="UniProtKB-KW"/>
</dbReference>
<dbReference type="GO" id="GO:0016491">
    <property type="term" value="F:oxidoreductase activity"/>
    <property type="evidence" value="ECO:0007669"/>
    <property type="project" value="UniProtKB-KW"/>
</dbReference>
<dbReference type="GO" id="GO:0009773">
    <property type="term" value="P:photosynthetic electron transport in photosystem I"/>
    <property type="evidence" value="ECO:0007669"/>
    <property type="project" value="InterPro"/>
</dbReference>
<dbReference type="FunFam" id="3.30.70.20:FF:000001">
    <property type="entry name" value="Photosystem I iron-sulfur center"/>
    <property type="match status" value="1"/>
</dbReference>
<dbReference type="Gene3D" id="3.30.70.20">
    <property type="match status" value="1"/>
</dbReference>
<dbReference type="HAMAP" id="MF_01303">
    <property type="entry name" value="PSI_PsaC"/>
    <property type="match status" value="1"/>
</dbReference>
<dbReference type="InterPro" id="IPR017896">
    <property type="entry name" value="4Fe4S_Fe-S-bd"/>
</dbReference>
<dbReference type="InterPro" id="IPR017900">
    <property type="entry name" value="4Fe4S_Fe_S_CS"/>
</dbReference>
<dbReference type="InterPro" id="IPR050157">
    <property type="entry name" value="PSI_iron-sulfur_center"/>
</dbReference>
<dbReference type="InterPro" id="IPR017491">
    <property type="entry name" value="PSI_PsaC"/>
</dbReference>
<dbReference type="NCBIfam" id="TIGR03048">
    <property type="entry name" value="PS_I_psaC"/>
    <property type="match status" value="1"/>
</dbReference>
<dbReference type="PANTHER" id="PTHR24960:SF79">
    <property type="entry name" value="PHOTOSYSTEM I IRON-SULFUR CENTER"/>
    <property type="match status" value="1"/>
</dbReference>
<dbReference type="PANTHER" id="PTHR24960">
    <property type="entry name" value="PHOTOSYSTEM I IRON-SULFUR CENTER-RELATED"/>
    <property type="match status" value="1"/>
</dbReference>
<dbReference type="Pfam" id="PF14697">
    <property type="entry name" value="Fer4_21"/>
    <property type="match status" value="1"/>
</dbReference>
<dbReference type="SUPFAM" id="SSF54862">
    <property type="entry name" value="4Fe-4S ferredoxins"/>
    <property type="match status" value="1"/>
</dbReference>
<dbReference type="PROSITE" id="PS00198">
    <property type="entry name" value="4FE4S_FER_1"/>
    <property type="match status" value="2"/>
</dbReference>
<dbReference type="PROSITE" id="PS51379">
    <property type="entry name" value="4FE4S_FER_2"/>
    <property type="match status" value="2"/>
</dbReference>
<evidence type="ECO:0000250" key="1"/>
<evidence type="ECO:0000255" key="2">
    <source>
        <dbReference type="HAMAP-Rule" id="MF_01303"/>
    </source>
</evidence>